<keyword id="KW-0472">Membrane</keyword>
<keyword id="KW-0496">Mitochondrion</keyword>
<keyword id="KW-0809">Transit peptide</keyword>
<keyword id="KW-0812">Transmembrane</keyword>
<keyword id="KW-1133">Transmembrane helix</keyword>
<proteinExistence type="inferred from homology"/>
<accession>C7GLB5</accession>
<gene>
    <name type="primary">AIM34</name>
    <name type="ORF">C1Q_00956</name>
</gene>
<sequence length="198" mass="22704">MSISLFGRIVSQQFSGIRAAGPGRSLYLPFTLLLKQPGAYKVSLHRYVHSTQTKSHLSFLMNNNDITPFQKFTVKVLKEQCKSRGLKLSGRKSDLLQRLITHDSCSNKKSSVKINEPKKKRILINDPIKITKKLVSDKTFRTIEKNISSLQNTPVIETPCDVHSHLQPRDRIFLLGFFMLSCLWWNLEPQESKPTIDH</sequence>
<reference key="1">
    <citation type="journal article" date="2009" name="Genome Res.">
        <title>Genome structure of a Saccharomyces cerevisiae strain widely used in bioethanol production.</title>
        <authorList>
            <person name="Argueso J.L."/>
            <person name="Carazzolle M.F."/>
            <person name="Mieczkowski P.A."/>
            <person name="Duarte F.M."/>
            <person name="Netto O.V.C."/>
            <person name="Missawa S.K."/>
            <person name="Galzerani F."/>
            <person name="Costa G.G.L."/>
            <person name="Vidal R.O."/>
            <person name="Noronha M.F."/>
            <person name="Dominska M."/>
            <person name="Andrietta M.G.S."/>
            <person name="Andrietta S.R."/>
            <person name="Cunha A.F."/>
            <person name="Gomes L.H."/>
            <person name="Tavares F.C.A."/>
            <person name="Alcarde A.R."/>
            <person name="Dietrich F.S."/>
            <person name="McCusker J.H."/>
            <person name="Petes T.D."/>
            <person name="Pereira G.A.G."/>
        </authorList>
    </citation>
    <scope>NUCLEOTIDE SEQUENCE [LARGE SCALE GENOMIC DNA]</scope>
    <source>
        <strain>JAY291</strain>
    </source>
</reference>
<comment type="subcellular location">
    <subcellularLocation>
        <location evidence="1">Mitochondrion membrane</location>
        <topology evidence="1">Single-pass membrane protein</topology>
    </subcellularLocation>
</comment>
<comment type="similarity">
    <text evidence="4">Belongs to the AIM34 family.</text>
</comment>
<evidence type="ECO:0000250" key="1"/>
<evidence type="ECO:0000255" key="2"/>
<evidence type="ECO:0000255" key="3">
    <source>
        <dbReference type="PROSITE-ProRule" id="PRU00186"/>
    </source>
</evidence>
<evidence type="ECO:0000305" key="4"/>
<name>AIM34_YEAS2</name>
<protein>
    <recommendedName>
        <fullName>Altered inheritance of mitochondria protein 34, mitochondrial</fullName>
    </recommendedName>
</protein>
<organism>
    <name type="scientific">Saccharomyces cerevisiae (strain JAY291)</name>
    <name type="common">Baker's yeast</name>
    <dbReference type="NCBI Taxonomy" id="574961"/>
    <lineage>
        <taxon>Eukaryota</taxon>
        <taxon>Fungi</taxon>
        <taxon>Dikarya</taxon>
        <taxon>Ascomycota</taxon>
        <taxon>Saccharomycotina</taxon>
        <taxon>Saccharomycetes</taxon>
        <taxon>Saccharomycetales</taxon>
        <taxon>Saccharomycetaceae</taxon>
        <taxon>Saccharomyces</taxon>
    </lineage>
</organism>
<dbReference type="EMBL" id="ACFL01000033">
    <property type="protein sequence ID" value="EEU08408.1"/>
    <property type="molecule type" value="Genomic_DNA"/>
</dbReference>
<dbReference type="SMR" id="C7GLB5"/>
<dbReference type="OrthoDB" id="22335at4893"/>
<dbReference type="Proteomes" id="UP000008073">
    <property type="component" value="Unassembled WGS sequence"/>
</dbReference>
<dbReference type="GO" id="GO:0031966">
    <property type="term" value="C:mitochondrial membrane"/>
    <property type="evidence" value="ECO:0007669"/>
    <property type="project" value="UniProtKB-SubCell"/>
</dbReference>
<dbReference type="FunFam" id="1.10.720.30:FF:000034">
    <property type="entry name" value="Altered inheritance of mitochondria protein 34, mitochondrial"/>
    <property type="match status" value="1"/>
</dbReference>
<dbReference type="Gene3D" id="1.10.720.30">
    <property type="entry name" value="SAP domain"/>
    <property type="match status" value="1"/>
</dbReference>
<dbReference type="InterPro" id="IPR003034">
    <property type="entry name" value="SAP_dom"/>
</dbReference>
<dbReference type="InterPro" id="IPR036361">
    <property type="entry name" value="SAP_dom_sf"/>
</dbReference>
<dbReference type="Pfam" id="PF02037">
    <property type="entry name" value="SAP"/>
    <property type="match status" value="1"/>
</dbReference>
<dbReference type="SMART" id="SM00513">
    <property type="entry name" value="SAP"/>
    <property type="match status" value="1"/>
</dbReference>
<dbReference type="SUPFAM" id="SSF68906">
    <property type="entry name" value="SAP domain"/>
    <property type="match status" value="1"/>
</dbReference>
<dbReference type="PROSITE" id="PS50800">
    <property type="entry name" value="SAP"/>
    <property type="match status" value="1"/>
</dbReference>
<feature type="transit peptide" description="Mitochondrion" evidence="2">
    <location>
        <begin position="1"/>
        <end position="55"/>
    </location>
</feature>
<feature type="chain" id="PRO_0000399713" description="Altered inheritance of mitochondria protein 34, mitochondrial">
    <location>
        <begin position="56"/>
        <end position="198"/>
    </location>
</feature>
<feature type="transmembrane region" description="Helical" evidence="2">
    <location>
        <begin position="172"/>
        <end position="187"/>
    </location>
</feature>
<feature type="domain" description="SAP" evidence="3">
    <location>
        <begin position="69"/>
        <end position="103"/>
    </location>
</feature>